<keyword id="KW-1185">Reference proteome</keyword>
<protein>
    <recommendedName>
        <fullName>Phi-Lf prophage-derived putative minor coat protein</fullName>
    </recommendedName>
</protein>
<gene>
    <name type="primary">gIX-1</name>
    <name type="ordered locus">XCC2061</name>
</gene>
<gene>
    <name type="primary">gIX-2</name>
    <name type="ordered locus">XCC2072</name>
</gene>
<proteinExistence type="predicted"/>
<accession>P68671</accession>
<accession>Q07484</accession>
<name>COAT3_XANCP</name>
<reference key="1">
    <citation type="journal article" date="2002" name="Nature">
        <title>Comparison of the genomes of two Xanthomonas pathogens with differing host specificities.</title>
        <authorList>
            <person name="da Silva A.C.R."/>
            <person name="Ferro J.A."/>
            <person name="Reinach F.C."/>
            <person name="Farah C.S."/>
            <person name="Furlan L.R."/>
            <person name="Quaggio R.B."/>
            <person name="Monteiro-Vitorello C.B."/>
            <person name="Van Sluys M.A."/>
            <person name="Almeida N.F. Jr."/>
            <person name="Alves L.M.C."/>
            <person name="do Amaral A.M."/>
            <person name="Bertolini M.C."/>
            <person name="Camargo L.E.A."/>
            <person name="Camarotte G."/>
            <person name="Cannavan F."/>
            <person name="Cardozo J."/>
            <person name="Chambergo F."/>
            <person name="Ciapina L.P."/>
            <person name="Cicarelli R.M.B."/>
            <person name="Coutinho L.L."/>
            <person name="Cursino-Santos J.R."/>
            <person name="El-Dorry H."/>
            <person name="Faria J.B."/>
            <person name="Ferreira A.J.S."/>
            <person name="Ferreira R.C.C."/>
            <person name="Ferro M.I.T."/>
            <person name="Formighieri E.F."/>
            <person name="Franco M.C."/>
            <person name="Greggio C.C."/>
            <person name="Gruber A."/>
            <person name="Katsuyama A.M."/>
            <person name="Kishi L.T."/>
            <person name="Leite R.P."/>
            <person name="Lemos E.G.M."/>
            <person name="Lemos M.V.F."/>
            <person name="Locali E.C."/>
            <person name="Machado M.A."/>
            <person name="Madeira A.M.B.N."/>
            <person name="Martinez-Rossi N.M."/>
            <person name="Martins E.C."/>
            <person name="Meidanis J."/>
            <person name="Menck C.F.M."/>
            <person name="Miyaki C.Y."/>
            <person name="Moon D.H."/>
            <person name="Moreira L.M."/>
            <person name="Novo M.T.M."/>
            <person name="Okura V.K."/>
            <person name="Oliveira M.C."/>
            <person name="Oliveira V.R."/>
            <person name="Pereira H.A."/>
            <person name="Rossi A."/>
            <person name="Sena J.A.D."/>
            <person name="Silva C."/>
            <person name="de Souza R.F."/>
            <person name="Spinola L.A.F."/>
            <person name="Takita M.A."/>
            <person name="Tamura R.E."/>
            <person name="Teixeira E.C."/>
            <person name="Tezza R.I.D."/>
            <person name="Trindade dos Santos M."/>
            <person name="Truffi D."/>
            <person name="Tsai S.M."/>
            <person name="White F.F."/>
            <person name="Setubal J.C."/>
            <person name="Kitajima J.P."/>
        </authorList>
    </citation>
    <scope>NUCLEOTIDE SEQUENCE [LARGE SCALE GENOMIC DNA]</scope>
    <source>
        <strain>ATCC 33913 / DSM 3586 / NCPPB 528 / LMG 568 / P 25</strain>
    </source>
</reference>
<sequence length="38" mass="4045">MPSQEDAVAWSTGCCGLVIVWFVLGRLAGSVAGMFNDR</sequence>
<dbReference type="EMBL" id="AE008922">
    <property type="protein sequence ID" value="AAM41350.1"/>
    <property type="molecule type" value="Genomic_DNA"/>
</dbReference>
<dbReference type="EMBL" id="AE008922">
    <property type="protein sequence ID" value="AAM41361.1"/>
    <property type="molecule type" value="Genomic_DNA"/>
</dbReference>
<dbReference type="RefSeq" id="NP_637426.1">
    <property type="nucleotide sequence ID" value="NC_003902.1"/>
</dbReference>
<dbReference type="RefSeq" id="NP_637437.1">
    <property type="nucleotide sequence ID" value="NC_003902.1"/>
</dbReference>
<dbReference type="SMR" id="P68671"/>
<dbReference type="STRING" id="190485.XCC2061"/>
<dbReference type="EnsemblBacteria" id="AAM41350">
    <property type="protein sequence ID" value="AAM41350"/>
    <property type="gene ID" value="XCC2061"/>
</dbReference>
<dbReference type="EnsemblBacteria" id="AAM41361">
    <property type="protein sequence ID" value="AAM41361"/>
    <property type="gene ID" value="XCC2072"/>
</dbReference>
<dbReference type="KEGG" id="xcc:XCC2061"/>
<dbReference type="KEGG" id="xcc:XCC2072"/>
<dbReference type="PATRIC" id="fig|190485.4.peg.2208"/>
<dbReference type="HOGENOM" id="CLU_3334815_0_0_6"/>
<dbReference type="OrthoDB" id="5999142at2"/>
<dbReference type="Proteomes" id="UP000001010">
    <property type="component" value="Chromosome"/>
</dbReference>
<dbReference type="InterPro" id="IPR031377">
    <property type="entry name" value="Tail_VII"/>
</dbReference>
<dbReference type="Pfam" id="PF17091">
    <property type="entry name" value="Inovirus_G7P_1"/>
    <property type="match status" value="1"/>
</dbReference>
<organism>
    <name type="scientific">Xanthomonas campestris pv. campestris (strain ATCC 33913 / DSM 3586 / NCPPB 528 / LMG 568 / P 25)</name>
    <dbReference type="NCBI Taxonomy" id="190485"/>
    <lineage>
        <taxon>Bacteria</taxon>
        <taxon>Pseudomonadati</taxon>
        <taxon>Pseudomonadota</taxon>
        <taxon>Gammaproteobacteria</taxon>
        <taxon>Lysobacterales</taxon>
        <taxon>Lysobacteraceae</taxon>
        <taxon>Xanthomonas</taxon>
    </lineage>
</organism>
<feature type="chain" id="PRO_0000098231" description="Phi-Lf prophage-derived putative minor coat protein">
    <location>
        <begin position="1"/>
        <end position="38"/>
    </location>
</feature>